<evidence type="ECO:0000255" key="1">
    <source>
        <dbReference type="HAMAP-Rule" id="MF_01505"/>
    </source>
</evidence>
<evidence type="ECO:0000256" key="2">
    <source>
        <dbReference type="SAM" id="MobiDB-lite"/>
    </source>
</evidence>
<feature type="chain" id="PRO_1000196553" description="Small, acid-soluble spore protein N">
    <location>
        <begin position="1"/>
        <end position="44"/>
    </location>
</feature>
<feature type="region of interest" description="Disordered" evidence="2">
    <location>
        <begin position="1"/>
        <end position="44"/>
    </location>
</feature>
<gene>
    <name evidence="1" type="primary">sspN</name>
    <name type="ordered locus">BCG9842_B1599</name>
</gene>
<keyword id="KW-0749">Sporulation</keyword>
<organism>
    <name type="scientific">Bacillus cereus (strain G9842)</name>
    <dbReference type="NCBI Taxonomy" id="405531"/>
    <lineage>
        <taxon>Bacteria</taxon>
        <taxon>Bacillati</taxon>
        <taxon>Bacillota</taxon>
        <taxon>Bacilli</taxon>
        <taxon>Bacillales</taxon>
        <taxon>Bacillaceae</taxon>
        <taxon>Bacillus</taxon>
        <taxon>Bacillus cereus group</taxon>
    </lineage>
</organism>
<dbReference type="EMBL" id="CP001186">
    <property type="protein sequence ID" value="ACK96472.1"/>
    <property type="molecule type" value="Genomic_DNA"/>
</dbReference>
<dbReference type="RefSeq" id="WP_000527987.1">
    <property type="nucleotide sequence ID" value="NC_011772.1"/>
</dbReference>
<dbReference type="GeneID" id="93007574"/>
<dbReference type="KEGG" id="bcg:BCG9842_B1599"/>
<dbReference type="HOGENOM" id="CLU_216714_0_0_9"/>
<dbReference type="Proteomes" id="UP000006744">
    <property type="component" value="Chromosome"/>
</dbReference>
<dbReference type="GO" id="GO:0042601">
    <property type="term" value="C:endospore-forming forespore"/>
    <property type="evidence" value="ECO:0007669"/>
    <property type="project" value="InterPro"/>
</dbReference>
<dbReference type="GO" id="GO:0030436">
    <property type="term" value="P:asexual sporulation"/>
    <property type="evidence" value="ECO:0007669"/>
    <property type="project" value="UniProtKB-UniRule"/>
</dbReference>
<dbReference type="GO" id="GO:0030435">
    <property type="term" value="P:sporulation resulting in formation of a cellular spore"/>
    <property type="evidence" value="ECO:0007669"/>
    <property type="project" value="UniProtKB-KW"/>
</dbReference>
<dbReference type="HAMAP" id="MF_01505">
    <property type="entry name" value="SspN"/>
    <property type="match status" value="1"/>
</dbReference>
<dbReference type="InterPro" id="IPR012612">
    <property type="entry name" value="SASP_SspN"/>
</dbReference>
<dbReference type="NCBIfam" id="NF006904">
    <property type="entry name" value="PRK09398.1"/>
    <property type="match status" value="1"/>
</dbReference>
<dbReference type="Pfam" id="PF08177">
    <property type="entry name" value="SspN"/>
    <property type="match status" value="1"/>
</dbReference>
<name>SSPN_BACC2</name>
<accession>B7IRQ5</accession>
<comment type="subcellular location">
    <subcellularLocation>
        <location evidence="1">Spore core</location>
    </subcellularLocation>
</comment>
<comment type="induction">
    <text evidence="1">Expressed only in the forespore compartment of sporulating cells.</text>
</comment>
<comment type="similarity">
    <text evidence="1">Belongs to the SspN family.</text>
</comment>
<protein>
    <recommendedName>
        <fullName evidence="1">Small, acid-soluble spore protein N</fullName>
        <shortName evidence="1">SASP N</shortName>
    </recommendedName>
</protein>
<proteinExistence type="inferred from homology"/>
<sequence length="44" mass="4681">MGNPKKNSKDFAPNHIGTQSKKAGGNKGKQMQDQTGKQPIVDNG</sequence>
<reference key="1">
    <citation type="submission" date="2008-10" db="EMBL/GenBank/DDBJ databases">
        <title>Genome sequence of Bacillus cereus G9842.</title>
        <authorList>
            <person name="Dodson R.J."/>
            <person name="Durkin A.S."/>
            <person name="Rosovitz M.J."/>
            <person name="Rasko D.A."/>
            <person name="Hoffmaster A."/>
            <person name="Ravel J."/>
            <person name="Sutton G."/>
        </authorList>
    </citation>
    <scope>NUCLEOTIDE SEQUENCE [LARGE SCALE GENOMIC DNA]</scope>
    <source>
        <strain>G9842</strain>
    </source>
</reference>